<feature type="chain" id="PRO_0000284763" description="Ferredoxin">
    <location>
        <begin position="1"/>
        <end position="96"/>
    </location>
</feature>
<feature type="domain" description="2Fe-2S ferredoxin-type" evidence="3">
    <location>
        <begin position="4"/>
        <end position="94"/>
    </location>
</feature>
<feature type="binding site" evidence="1 3">
    <location>
        <position position="40"/>
    </location>
    <ligand>
        <name>[2Fe-2S] cluster</name>
        <dbReference type="ChEBI" id="CHEBI:190135"/>
    </ligand>
</feature>
<feature type="binding site" evidence="1 3">
    <location>
        <position position="45"/>
    </location>
    <ligand>
        <name>[2Fe-2S] cluster</name>
        <dbReference type="ChEBI" id="CHEBI:190135"/>
    </ligand>
</feature>
<feature type="binding site" evidence="1 3">
    <location>
        <position position="48"/>
    </location>
    <ligand>
        <name>[2Fe-2S] cluster</name>
        <dbReference type="ChEBI" id="CHEBI:190135"/>
    </ligand>
</feature>
<feature type="binding site" evidence="1 3">
    <location>
        <position position="78"/>
    </location>
    <ligand>
        <name>[2Fe-2S] cluster</name>
        <dbReference type="ChEBI" id="CHEBI:190135"/>
    </ligand>
</feature>
<evidence type="ECO:0000250" key="1">
    <source>
        <dbReference type="UniProtKB" id="P27787"/>
    </source>
</evidence>
<evidence type="ECO:0000255" key="2"/>
<evidence type="ECO:0000255" key="3">
    <source>
        <dbReference type="PROSITE-ProRule" id="PRU00465"/>
    </source>
</evidence>
<evidence type="ECO:0000269" key="4">
    <source>
    </source>
</evidence>
<evidence type="ECO:0000305" key="5"/>
<dbReference type="SMR" id="P85121"/>
<dbReference type="GO" id="GO:0009570">
    <property type="term" value="C:chloroplast stroma"/>
    <property type="evidence" value="ECO:0007669"/>
    <property type="project" value="TreeGrafter"/>
</dbReference>
<dbReference type="GO" id="GO:0051537">
    <property type="term" value="F:2 iron, 2 sulfur cluster binding"/>
    <property type="evidence" value="ECO:0007669"/>
    <property type="project" value="UniProtKB-KW"/>
</dbReference>
<dbReference type="GO" id="GO:0009055">
    <property type="term" value="F:electron transfer activity"/>
    <property type="evidence" value="ECO:0007669"/>
    <property type="project" value="InterPro"/>
</dbReference>
<dbReference type="GO" id="GO:0046872">
    <property type="term" value="F:metal ion binding"/>
    <property type="evidence" value="ECO:0007669"/>
    <property type="project" value="UniProtKB-KW"/>
</dbReference>
<dbReference type="GO" id="GO:0022900">
    <property type="term" value="P:electron transport chain"/>
    <property type="evidence" value="ECO:0007669"/>
    <property type="project" value="InterPro"/>
</dbReference>
<dbReference type="GO" id="GO:0006124">
    <property type="term" value="P:ferredoxin metabolic process"/>
    <property type="evidence" value="ECO:0007669"/>
    <property type="project" value="UniProtKB-ARBA"/>
</dbReference>
<dbReference type="CDD" id="cd00207">
    <property type="entry name" value="fer2"/>
    <property type="match status" value="1"/>
</dbReference>
<dbReference type="FunFam" id="3.10.20.30:FF:000014">
    <property type="entry name" value="Ferredoxin"/>
    <property type="match status" value="1"/>
</dbReference>
<dbReference type="Gene3D" id="3.10.20.30">
    <property type="match status" value="1"/>
</dbReference>
<dbReference type="InterPro" id="IPR036010">
    <property type="entry name" value="2Fe-2S_ferredoxin-like_sf"/>
</dbReference>
<dbReference type="InterPro" id="IPR001041">
    <property type="entry name" value="2Fe-2S_ferredoxin-type"/>
</dbReference>
<dbReference type="InterPro" id="IPR006058">
    <property type="entry name" value="2Fe2S_fd_BS"/>
</dbReference>
<dbReference type="InterPro" id="IPR012675">
    <property type="entry name" value="Beta-grasp_dom_sf"/>
</dbReference>
<dbReference type="InterPro" id="IPR010241">
    <property type="entry name" value="Fd_pln"/>
</dbReference>
<dbReference type="NCBIfam" id="TIGR02008">
    <property type="entry name" value="fdx_plant"/>
    <property type="match status" value="1"/>
</dbReference>
<dbReference type="PANTHER" id="PTHR43112">
    <property type="entry name" value="FERREDOXIN"/>
    <property type="match status" value="1"/>
</dbReference>
<dbReference type="PANTHER" id="PTHR43112:SF3">
    <property type="entry name" value="FERREDOXIN-2, CHLOROPLASTIC"/>
    <property type="match status" value="1"/>
</dbReference>
<dbReference type="Pfam" id="PF00111">
    <property type="entry name" value="Fer2"/>
    <property type="match status" value="1"/>
</dbReference>
<dbReference type="SUPFAM" id="SSF54292">
    <property type="entry name" value="2Fe-2S ferredoxin-like"/>
    <property type="match status" value="1"/>
</dbReference>
<dbReference type="PROSITE" id="PS00197">
    <property type="entry name" value="2FE2S_FER_1"/>
    <property type="match status" value="1"/>
</dbReference>
<dbReference type="PROSITE" id="PS51085">
    <property type="entry name" value="2FE2S_FER_2"/>
    <property type="match status" value="1"/>
</dbReference>
<protein>
    <recommendedName>
        <fullName>Ferredoxin</fullName>
    </recommendedName>
</protein>
<sequence length="96" mass="10521">ATYYKVKLLTPEGEKEFECPDDVYILDNAEEIGIDLPYSCRAGSCSSCAGKVVSGKVDNSDNSFLNDDNMDAGYVLTCHAYANSDVVIETHKEEEV</sequence>
<comment type="function">
    <text evidence="5">Ferredoxins are iron-sulfur proteins that transfer electrons in a wide variety of metabolic reactions.</text>
</comment>
<comment type="cofactor">
    <cofactor evidence="5">
        <name>[2Fe-2S] cluster</name>
        <dbReference type="ChEBI" id="CHEBI:190135"/>
    </cofactor>
    <text evidence="5">Binds 1 [2Fe-2S] cluster.</text>
</comment>
<comment type="subcellular location">
    <subcellularLocation>
        <location>Plastid</location>
        <location>Chloroplast</location>
    </subcellularLocation>
</comment>
<comment type="similarity">
    <text evidence="2">Belongs to the 2Fe2S plant-type ferredoxin family.</text>
</comment>
<accession>P85121</accession>
<reference evidence="5" key="1">
    <citation type="journal article" date="2006" name="Biol. Pharm. Bull.">
        <title>Protein chemotaxonomy. XIII. Amino acid sequence of ferredoxin from Panax ginseng.</title>
        <authorList>
            <person name="Mino Y."/>
        </authorList>
    </citation>
    <scope>PROTEIN SEQUENCE</scope>
    <source>
        <tissue evidence="4">Leaf</tissue>
    </source>
</reference>
<name>FER_PANGI</name>
<keyword id="KW-0001">2Fe-2S</keyword>
<keyword id="KW-0150">Chloroplast</keyword>
<keyword id="KW-0903">Direct protein sequencing</keyword>
<keyword id="KW-0249">Electron transport</keyword>
<keyword id="KW-0408">Iron</keyword>
<keyword id="KW-0411">Iron-sulfur</keyword>
<keyword id="KW-0479">Metal-binding</keyword>
<keyword id="KW-0934">Plastid</keyword>
<keyword id="KW-0813">Transport</keyword>
<proteinExistence type="evidence at protein level"/>
<organism>
    <name type="scientific">Panax ginseng</name>
    <name type="common">Korean ginseng</name>
    <dbReference type="NCBI Taxonomy" id="4054"/>
    <lineage>
        <taxon>Eukaryota</taxon>
        <taxon>Viridiplantae</taxon>
        <taxon>Streptophyta</taxon>
        <taxon>Embryophyta</taxon>
        <taxon>Tracheophyta</taxon>
        <taxon>Spermatophyta</taxon>
        <taxon>Magnoliopsida</taxon>
        <taxon>eudicotyledons</taxon>
        <taxon>Gunneridae</taxon>
        <taxon>Pentapetalae</taxon>
        <taxon>asterids</taxon>
        <taxon>campanulids</taxon>
        <taxon>Apiales</taxon>
        <taxon>Araliaceae</taxon>
        <taxon>Panax</taxon>
    </lineage>
</organism>